<sequence length="415" mass="46375">MENLVEKLKKAKESTYILSLLNTNEKNEALRAIANNIEKNIDKIIKENEKDIKRGEEKGLSKAILDRILLNEKRLKDIVKSIEDVIKLPDPVGEIVSMQKRPNGILVGQMRVPIGVIAIIYEARPNVTVDATILALKSGNAIVLRGSSDALNSNIILTNIMKEALSNTKIPQDAVQIIESPEHSVVEELLQMTDYIDVAIPRGSAKFIKHVMNISKVPVIETGAGNNHIYVEEDADFEMARKIIINAKVQRPSVCNAIEKLLVHKNIAEEFLPVIVKDLREYNVEIRGCEKTLKIVKDAIPATEEDWYTEYLDYIIAIKVVDSIDEAIAHINKYNTKHSEAIITKDYHKALKFLRMVDAAAVYVNASTRFTDGGEFGLGAEIGISTQKLHARGPMGLKELTTTKYVIFGEGQIRE</sequence>
<reference key="1">
    <citation type="journal article" date="2014" name="Genome Announc.">
        <title>Complete Genome Sequence of the Extreme Thermophile Dictyoglomus thermophilum H-6-12.</title>
        <authorList>
            <person name="Coil D.A."/>
            <person name="Badger J.H."/>
            <person name="Forberger H.C."/>
            <person name="Riggs F."/>
            <person name="Madupu R."/>
            <person name="Fedorova N."/>
            <person name="Ward N."/>
            <person name="Robb F.T."/>
            <person name="Eisen J.A."/>
        </authorList>
    </citation>
    <scope>NUCLEOTIDE SEQUENCE [LARGE SCALE GENOMIC DNA]</scope>
    <source>
        <strain>ATCC 35947 / DSM 3960 / H-6-12</strain>
    </source>
</reference>
<comment type="function">
    <text evidence="1">Catalyzes the NADPH-dependent reduction of L-glutamate 5-phosphate into L-glutamate 5-semialdehyde and phosphate. The product spontaneously undergoes cyclization to form 1-pyrroline-5-carboxylate.</text>
</comment>
<comment type="catalytic activity">
    <reaction evidence="1">
        <text>L-glutamate 5-semialdehyde + phosphate + NADP(+) = L-glutamyl 5-phosphate + NADPH + H(+)</text>
        <dbReference type="Rhea" id="RHEA:19541"/>
        <dbReference type="ChEBI" id="CHEBI:15378"/>
        <dbReference type="ChEBI" id="CHEBI:43474"/>
        <dbReference type="ChEBI" id="CHEBI:57783"/>
        <dbReference type="ChEBI" id="CHEBI:58066"/>
        <dbReference type="ChEBI" id="CHEBI:58274"/>
        <dbReference type="ChEBI" id="CHEBI:58349"/>
        <dbReference type="EC" id="1.2.1.41"/>
    </reaction>
</comment>
<comment type="pathway">
    <text evidence="1">Amino-acid biosynthesis; L-proline biosynthesis; L-glutamate 5-semialdehyde from L-glutamate: step 2/2.</text>
</comment>
<comment type="subcellular location">
    <subcellularLocation>
        <location evidence="1">Cytoplasm</location>
    </subcellularLocation>
</comment>
<comment type="similarity">
    <text evidence="1">Belongs to the gamma-glutamyl phosphate reductase family.</text>
</comment>
<proteinExistence type="inferred from homology"/>
<evidence type="ECO:0000255" key="1">
    <source>
        <dbReference type="HAMAP-Rule" id="MF_00412"/>
    </source>
</evidence>
<protein>
    <recommendedName>
        <fullName evidence="1">Gamma-glutamyl phosphate reductase</fullName>
        <shortName evidence="1">GPR</shortName>
        <ecNumber evidence="1">1.2.1.41</ecNumber>
    </recommendedName>
    <alternativeName>
        <fullName evidence="1">Glutamate-5-semialdehyde dehydrogenase</fullName>
    </alternativeName>
    <alternativeName>
        <fullName evidence="1">Glutamyl-gamma-semialdehyde dehydrogenase</fullName>
        <shortName evidence="1">GSA dehydrogenase</shortName>
    </alternativeName>
</protein>
<name>PROA_DICT6</name>
<organism>
    <name type="scientific">Dictyoglomus thermophilum (strain ATCC 35947 / DSM 3960 / H-6-12)</name>
    <dbReference type="NCBI Taxonomy" id="309799"/>
    <lineage>
        <taxon>Bacteria</taxon>
        <taxon>Pseudomonadati</taxon>
        <taxon>Dictyoglomota</taxon>
        <taxon>Dictyoglomia</taxon>
        <taxon>Dictyoglomales</taxon>
        <taxon>Dictyoglomaceae</taxon>
        <taxon>Dictyoglomus</taxon>
    </lineage>
</organism>
<dbReference type="EC" id="1.2.1.41" evidence="1"/>
<dbReference type="EMBL" id="CP001146">
    <property type="protein sequence ID" value="ACI19199.1"/>
    <property type="molecule type" value="Genomic_DNA"/>
</dbReference>
<dbReference type="RefSeq" id="WP_012547831.1">
    <property type="nucleotide sequence ID" value="NC_011297.1"/>
</dbReference>
<dbReference type="SMR" id="B5YEQ8"/>
<dbReference type="STRING" id="309799.DICTH_1187"/>
<dbReference type="PaxDb" id="309799-DICTH_1187"/>
<dbReference type="KEGG" id="dth:DICTH_1187"/>
<dbReference type="eggNOG" id="COG0014">
    <property type="taxonomic scope" value="Bacteria"/>
</dbReference>
<dbReference type="HOGENOM" id="CLU_030231_0_0_0"/>
<dbReference type="OrthoDB" id="9809970at2"/>
<dbReference type="UniPathway" id="UPA00098">
    <property type="reaction ID" value="UER00360"/>
</dbReference>
<dbReference type="Proteomes" id="UP000001733">
    <property type="component" value="Chromosome"/>
</dbReference>
<dbReference type="GO" id="GO:0005737">
    <property type="term" value="C:cytoplasm"/>
    <property type="evidence" value="ECO:0007669"/>
    <property type="project" value="UniProtKB-SubCell"/>
</dbReference>
<dbReference type="GO" id="GO:0004350">
    <property type="term" value="F:glutamate-5-semialdehyde dehydrogenase activity"/>
    <property type="evidence" value="ECO:0007669"/>
    <property type="project" value="UniProtKB-UniRule"/>
</dbReference>
<dbReference type="GO" id="GO:0050661">
    <property type="term" value="F:NADP binding"/>
    <property type="evidence" value="ECO:0007669"/>
    <property type="project" value="InterPro"/>
</dbReference>
<dbReference type="GO" id="GO:0055129">
    <property type="term" value="P:L-proline biosynthetic process"/>
    <property type="evidence" value="ECO:0007669"/>
    <property type="project" value="UniProtKB-UniRule"/>
</dbReference>
<dbReference type="CDD" id="cd07079">
    <property type="entry name" value="ALDH_F18-19_ProA-GPR"/>
    <property type="match status" value="1"/>
</dbReference>
<dbReference type="FunFam" id="3.40.309.10:FF:000006">
    <property type="entry name" value="Gamma-glutamyl phosphate reductase"/>
    <property type="match status" value="1"/>
</dbReference>
<dbReference type="Gene3D" id="3.40.605.10">
    <property type="entry name" value="Aldehyde Dehydrogenase, Chain A, domain 1"/>
    <property type="match status" value="1"/>
</dbReference>
<dbReference type="Gene3D" id="3.40.309.10">
    <property type="entry name" value="Aldehyde Dehydrogenase, Chain A, domain 2"/>
    <property type="match status" value="1"/>
</dbReference>
<dbReference type="HAMAP" id="MF_00412">
    <property type="entry name" value="ProA"/>
    <property type="match status" value="1"/>
</dbReference>
<dbReference type="InterPro" id="IPR016161">
    <property type="entry name" value="Ald_DH/histidinol_DH"/>
</dbReference>
<dbReference type="InterPro" id="IPR016163">
    <property type="entry name" value="Ald_DH_C"/>
</dbReference>
<dbReference type="InterPro" id="IPR016162">
    <property type="entry name" value="Ald_DH_N"/>
</dbReference>
<dbReference type="InterPro" id="IPR015590">
    <property type="entry name" value="Aldehyde_DH_dom"/>
</dbReference>
<dbReference type="InterPro" id="IPR020593">
    <property type="entry name" value="G-glutamylP_reductase_CS"/>
</dbReference>
<dbReference type="InterPro" id="IPR012134">
    <property type="entry name" value="Glu-5-SA_DH"/>
</dbReference>
<dbReference type="InterPro" id="IPR000965">
    <property type="entry name" value="GPR_dom"/>
</dbReference>
<dbReference type="NCBIfam" id="NF001221">
    <property type="entry name" value="PRK00197.1"/>
    <property type="match status" value="1"/>
</dbReference>
<dbReference type="NCBIfam" id="TIGR00407">
    <property type="entry name" value="proA"/>
    <property type="match status" value="1"/>
</dbReference>
<dbReference type="PANTHER" id="PTHR11063:SF8">
    <property type="entry name" value="DELTA-1-PYRROLINE-5-CARBOXYLATE SYNTHASE"/>
    <property type="match status" value="1"/>
</dbReference>
<dbReference type="PANTHER" id="PTHR11063">
    <property type="entry name" value="GLUTAMATE SEMIALDEHYDE DEHYDROGENASE"/>
    <property type="match status" value="1"/>
</dbReference>
<dbReference type="Pfam" id="PF00171">
    <property type="entry name" value="Aldedh"/>
    <property type="match status" value="2"/>
</dbReference>
<dbReference type="PIRSF" id="PIRSF000151">
    <property type="entry name" value="GPR"/>
    <property type="match status" value="1"/>
</dbReference>
<dbReference type="SUPFAM" id="SSF53720">
    <property type="entry name" value="ALDH-like"/>
    <property type="match status" value="1"/>
</dbReference>
<dbReference type="PROSITE" id="PS01223">
    <property type="entry name" value="PROA"/>
    <property type="match status" value="1"/>
</dbReference>
<accession>B5YEQ8</accession>
<feature type="chain" id="PRO_1000193599" description="Gamma-glutamyl phosphate reductase">
    <location>
        <begin position="1"/>
        <end position="415"/>
    </location>
</feature>
<keyword id="KW-0028">Amino-acid biosynthesis</keyword>
<keyword id="KW-0963">Cytoplasm</keyword>
<keyword id="KW-0521">NADP</keyword>
<keyword id="KW-0560">Oxidoreductase</keyword>
<keyword id="KW-0641">Proline biosynthesis</keyword>
<gene>
    <name evidence="1" type="primary">proA</name>
    <name type="ordered locus">DICTH_1187</name>
</gene>